<comment type="function">
    <text evidence="2">One of the essential components for the initiation of protein synthesis. Protects formylmethionyl-tRNA from spontaneous hydrolysis and promotes its binding to the 30S ribosomal subunits. Also involved in the hydrolysis of GTP during the formation of the 70S ribosomal complex.</text>
</comment>
<comment type="subcellular location">
    <subcellularLocation>
        <location evidence="2">Cytoplasm</location>
    </subcellularLocation>
</comment>
<comment type="similarity">
    <text evidence="2">Belongs to the TRAFAC class translation factor GTPase superfamily. Classic translation factor GTPase family. IF-2 subfamily.</text>
</comment>
<sequence length="962" mass="103710">MASTTVAQLAAELSRSAAALLEQLQAAGVGKATPEDIITESDKTRLLDYLKRSHGQADDSSRKKITLTKRETSEIRQSDGTGKTRTVQVEVRKKRVLIKRDEAAPDAQADAVEAQAPVVDAVEEARRDEEERQQAELLARQEAEAKAAREAAEREEAERRARQEALEAEQRRQAELAARKAEEEAAASRAVTEANEDSSRKKAEDEKARVTAERAEAQKAADEAKAAADKARAEQEVAARKRREAAEAEARAIQQMLNAPPRVLKAPSERKAEEKKAEQTGTLHKPVKPAGATTEAKKDEKKPATTTTTTATADKKGKVVKAGWQDDSSRKKGSGLKTRGDTSGGVGGWRGGPRGRGGRQQQHDDSRSSFQAPTEPVVREVHVPETVSVADLAHKMAVKASEVIKQMMKLGQMVTINQVLDQETAMIVVEEMGHKAYAAKLDDPEALLVVGGEEHTDAELLPRPPVVTVMGHVDHGKTSLLDYIRRTKVAAGEAGGITQHIGAYHVETDRGVITFLDTPGHEAFTAMRARGAKATDIVILVVAADDGVMPQTKEAIAHAKAAGVPIVVAINKIDKPDANPDRVKQELVAEQVVPEEYGGDSPFVPVSAKMGTGVEDLLEQVLLQAEVLELTAPVDAPAKGLVVEAQLDKGKGPIATILVSSGTLKRGDVVLAGSAYGRVRAMLDENGKPTKEAGPSIPVEIQGLSEVPAAGEEVLVLPDERKAREIALFRQGKFRDVKLAKQQAAKLENMLEQMAEGEVQTLPLIVKADVQGSQEALVQSLQKLSTAEVRVQIVHGGVGGISESDVNLATASKAVIIGFNVRADAGARKLAEHNGIDIRYYNIIYDAVDEIKAAMSGMLAPEKRETTIGQVEVRQVFRVPKIGAVAGCMVTDGLVKRNSLVRVLRNNVVIHDGELDSLKRFKDDVKEVKQGFECGLSIKNFNDVQEGDQLEVYEITEVARTL</sequence>
<protein>
    <recommendedName>
        <fullName evidence="2">Translation initiation factor IF-2</fullName>
    </recommendedName>
</protein>
<reference key="1">
    <citation type="journal article" date="2006" name="Nat. Biotechnol.">
        <title>Genome sequence of the bioplastic-producing 'Knallgas' bacterium Ralstonia eutropha H16.</title>
        <authorList>
            <person name="Pohlmann A."/>
            <person name="Fricke W.F."/>
            <person name="Reinecke F."/>
            <person name="Kusian B."/>
            <person name="Liesegang H."/>
            <person name="Cramm R."/>
            <person name="Eitinger T."/>
            <person name="Ewering C."/>
            <person name="Poetter M."/>
            <person name="Schwartz E."/>
            <person name="Strittmatter A."/>
            <person name="Voss I."/>
            <person name="Gottschalk G."/>
            <person name="Steinbuechel A."/>
            <person name="Friedrich B."/>
            <person name="Bowien B."/>
        </authorList>
    </citation>
    <scope>NUCLEOTIDE SEQUENCE [LARGE SCALE GENOMIC DNA]</scope>
    <source>
        <strain>ATCC 17699 / DSM 428 / KCTC 22496 / NCIMB 10442 / H16 / Stanier 337</strain>
    </source>
</reference>
<keyword id="KW-0963">Cytoplasm</keyword>
<keyword id="KW-0342">GTP-binding</keyword>
<keyword id="KW-0396">Initiation factor</keyword>
<keyword id="KW-0547">Nucleotide-binding</keyword>
<keyword id="KW-0648">Protein biosynthesis</keyword>
<keyword id="KW-1185">Reference proteome</keyword>
<proteinExistence type="inferred from homology"/>
<dbReference type="EMBL" id="AM260479">
    <property type="protein sequence ID" value="CAJ93402.1"/>
    <property type="molecule type" value="Genomic_DNA"/>
</dbReference>
<dbReference type="RefSeq" id="WP_010809483.1">
    <property type="nucleotide sequence ID" value="NZ_CP039287.1"/>
</dbReference>
<dbReference type="SMR" id="Q0K9B9"/>
<dbReference type="STRING" id="381666.H16_A2306"/>
<dbReference type="KEGG" id="reh:H16_A2306"/>
<dbReference type="eggNOG" id="COG0532">
    <property type="taxonomic scope" value="Bacteria"/>
</dbReference>
<dbReference type="HOGENOM" id="CLU_006301_6_0_4"/>
<dbReference type="OrthoDB" id="9811804at2"/>
<dbReference type="Proteomes" id="UP000008210">
    <property type="component" value="Chromosome 1"/>
</dbReference>
<dbReference type="GO" id="GO:0005829">
    <property type="term" value="C:cytosol"/>
    <property type="evidence" value="ECO:0007669"/>
    <property type="project" value="TreeGrafter"/>
</dbReference>
<dbReference type="GO" id="GO:0005525">
    <property type="term" value="F:GTP binding"/>
    <property type="evidence" value="ECO:0007669"/>
    <property type="project" value="UniProtKB-KW"/>
</dbReference>
<dbReference type="GO" id="GO:0003924">
    <property type="term" value="F:GTPase activity"/>
    <property type="evidence" value="ECO:0007669"/>
    <property type="project" value="UniProtKB-UniRule"/>
</dbReference>
<dbReference type="GO" id="GO:0097216">
    <property type="term" value="F:guanosine tetraphosphate binding"/>
    <property type="evidence" value="ECO:0007669"/>
    <property type="project" value="UniProtKB-ARBA"/>
</dbReference>
<dbReference type="GO" id="GO:0003743">
    <property type="term" value="F:translation initiation factor activity"/>
    <property type="evidence" value="ECO:0007669"/>
    <property type="project" value="UniProtKB-UniRule"/>
</dbReference>
<dbReference type="CDD" id="cd01887">
    <property type="entry name" value="IF2_eIF5B"/>
    <property type="match status" value="1"/>
</dbReference>
<dbReference type="CDD" id="cd03702">
    <property type="entry name" value="IF2_mtIF2_II"/>
    <property type="match status" value="1"/>
</dbReference>
<dbReference type="CDD" id="cd03692">
    <property type="entry name" value="mtIF2_IVc"/>
    <property type="match status" value="1"/>
</dbReference>
<dbReference type="FunFam" id="2.40.30.10:FF:000007">
    <property type="entry name" value="Translation initiation factor IF-2"/>
    <property type="match status" value="1"/>
</dbReference>
<dbReference type="FunFam" id="2.40.30.10:FF:000008">
    <property type="entry name" value="Translation initiation factor IF-2"/>
    <property type="match status" value="1"/>
</dbReference>
<dbReference type="FunFam" id="3.40.50.10050:FF:000001">
    <property type="entry name" value="Translation initiation factor IF-2"/>
    <property type="match status" value="1"/>
</dbReference>
<dbReference type="FunFam" id="3.40.50.300:FF:000019">
    <property type="entry name" value="Translation initiation factor IF-2"/>
    <property type="match status" value="1"/>
</dbReference>
<dbReference type="Gene3D" id="3.40.50.300">
    <property type="entry name" value="P-loop containing nucleotide triphosphate hydrolases"/>
    <property type="match status" value="1"/>
</dbReference>
<dbReference type="Gene3D" id="3.30.56.50">
    <property type="entry name" value="Putative DNA-binding domain, N-terminal subdomain of bacterial translation initiation factor IF2"/>
    <property type="match status" value="1"/>
</dbReference>
<dbReference type="Gene3D" id="2.40.30.10">
    <property type="entry name" value="Translation factors"/>
    <property type="match status" value="2"/>
</dbReference>
<dbReference type="Gene3D" id="3.40.50.10050">
    <property type="entry name" value="Translation initiation factor IF- 2, domain 3"/>
    <property type="match status" value="1"/>
</dbReference>
<dbReference type="HAMAP" id="MF_00100_B">
    <property type="entry name" value="IF_2_B"/>
    <property type="match status" value="1"/>
</dbReference>
<dbReference type="InterPro" id="IPR009061">
    <property type="entry name" value="DNA-bd_dom_put_sf"/>
</dbReference>
<dbReference type="InterPro" id="IPR053905">
    <property type="entry name" value="EF-G-like_DII"/>
</dbReference>
<dbReference type="InterPro" id="IPR004161">
    <property type="entry name" value="EFTu-like_2"/>
</dbReference>
<dbReference type="InterPro" id="IPR013575">
    <property type="entry name" value="IF2_assoc_dom_bac"/>
</dbReference>
<dbReference type="InterPro" id="IPR044145">
    <property type="entry name" value="IF2_II"/>
</dbReference>
<dbReference type="InterPro" id="IPR006847">
    <property type="entry name" value="IF2_N"/>
</dbReference>
<dbReference type="InterPro" id="IPR027417">
    <property type="entry name" value="P-loop_NTPase"/>
</dbReference>
<dbReference type="InterPro" id="IPR005225">
    <property type="entry name" value="Small_GTP-bd"/>
</dbReference>
<dbReference type="InterPro" id="IPR000795">
    <property type="entry name" value="T_Tr_GTP-bd_dom"/>
</dbReference>
<dbReference type="InterPro" id="IPR000178">
    <property type="entry name" value="TF_IF2_bacterial-like"/>
</dbReference>
<dbReference type="InterPro" id="IPR015760">
    <property type="entry name" value="TIF_IF2"/>
</dbReference>
<dbReference type="InterPro" id="IPR023115">
    <property type="entry name" value="TIF_IF2_dom3"/>
</dbReference>
<dbReference type="InterPro" id="IPR036925">
    <property type="entry name" value="TIF_IF2_dom3_sf"/>
</dbReference>
<dbReference type="InterPro" id="IPR009000">
    <property type="entry name" value="Transl_B-barrel_sf"/>
</dbReference>
<dbReference type="NCBIfam" id="TIGR00487">
    <property type="entry name" value="IF-2"/>
    <property type="match status" value="1"/>
</dbReference>
<dbReference type="NCBIfam" id="TIGR00231">
    <property type="entry name" value="small_GTP"/>
    <property type="match status" value="1"/>
</dbReference>
<dbReference type="PANTHER" id="PTHR43381:SF5">
    <property type="entry name" value="TR-TYPE G DOMAIN-CONTAINING PROTEIN"/>
    <property type="match status" value="1"/>
</dbReference>
<dbReference type="PANTHER" id="PTHR43381">
    <property type="entry name" value="TRANSLATION INITIATION FACTOR IF-2-RELATED"/>
    <property type="match status" value="1"/>
</dbReference>
<dbReference type="Pfam" id="PF22042">
    <property type="entry name" value="EF-G_D2"/>
    <property type="match status" value="1"/>
</dbReference>
<dbReference type="Pfam" id="PF00009">
    <property type="entry name" value="GTP_EFTU"/>
    <property type="match status" value="1"/>
</dbReference>
<dbReference type="Pfam" id="PF03144">
    <property type="entry name" value="GTP_EFTU_D2"/>
    <property type="match status" value="1"/>
</dbReference>
<dbReference type="Pfam" id="PF11987">
    <property type="entry name" value="IF-2"/>
    <property type="match status" value="1"/>
</dbReference>
<dbReference type="Pfam" id="PF08364">
    <property type="entry name" value="IF2_assoc"/>
    <property type="match status" value="1"/>
</dbReference>
<dbReference type="Pfam" id="PF04760">
    <property type="entry name" value="IF2_N"/>
    <property type="match status" value="2"/>
</dbReference>
<dbReference type="SUPFAM" id="SSF52156">
    <property type="entry name" value="Initiation factor IF2/eIF5b, domain 3"/>
    <property type="match status" value="1"/>
</dbReference>
<dbReference type="SUPFAM" id="SSF52540">
    <property type="entry name" value="P-loop containing nucleoside triphosphate hydrolases"/>
    <property type="match status" value="1"/>
</dbReference>
<dbReference type="SUPFAM" id="SSF46955">
    <property type="entry name" value="Putative DNA-binding domain"/>
    <property type="match status" value="1"/>
</dbReference>
<dbReference type="SUPFAM" id="SSF50447">
    <property type="entry name" value="Translation proteins"/>
    <property type="match status" value="2"/>
</dbReference>
<dbReference type="PROSITE" id="PS51722">
    <property type="entry name" value="G_TR_2"/>
    <property type="match status" value="1"/>
</dbReference>
<dbReference type="PROSITE" id="PS01176">
    <property type="entry name" value="IF2"/>
    <property type="match status" value="1"/>
</dbReference>
<organism>
    <name type="scientific">Cupriavidus necator (strain ATCC 17699 / DSM 428 / KCTC 22496 / NCIMB 10442 / H16 / Stanier 337)</name>
    <name type="common">Ralstonia eutropha</name>
    <dbReference type="NCBI Taxonomy" id="381666"/>
    <lineage>
        <taxon>Bacteria</taxon>
        <taxon>Pseudomonadati</taxon>
        <taxon>Pseudomonadota</taxon>
        <taxon>Betaproteobacteria</taxon>
        <taxon>Burkholderiales</taxon>
        <taxon>Burkholderiaceae</taxon>
        <taxon>Cupriavidus</taxon>
    </lineage>
</organism>
<gene>
    <name evidence="2" type="primary">infB</name>
    <name type="ordered locus">H16_A2306</name>
</gene>
<evidence type="ECO:0000250" key="1"/>
<evidence type="ECO:0000255" key="2">
    <source>
        <dbReference type="HAMAP-Rule" id="MF_00100"/>
    </source>
</evidence>
<evidence type="ECO:0000256" key="3">
    <source>
        <dbReference type="SAM" id="MobiDB-lite"/>
    </source>
</evidence>
<name>IF2_CUPNH</name>
<feature type="chain" id="PRO_1000008310" description="Translation initiation factor IF-2">
    <location>
        <begin position="1"/>
        <end position="962"/>
    </location>
</feature>
<feature type="domain" description="tr-type G">
    <location>
        <begin position="462"/>
        <end position="631"/>
    </location>
</feature>
<feature type="region of interest" description="Disordered" evidence="3">
    <location>
        <begin position="52"/>
        <end position="87"/>
    </location>
</feature>
<feature type="region of interest" description="Disordered" evidence="3">
    <location>
        <begin position="121"/>
        <end position="378"/>
    </location>
</feature>
<feature type="region of interest" description="G1" evidence="1">
    <location>
        <begin position="471"/>
        <end position="478"/>
    </location>
</feature>
<feature type="region of interest" description="G2" evidence="1">
    <location>
        <begin position="496"/>
        <end position="500"/>
    </location>
</feature>
<feature type="region of interest" description="G3" evidence="1">
    <location>
        <begin position="517"/>
        <end position="520"/>
    </location>
</feature>
<feature type="region of interest" description="G4" evidence="1">
    <location>
        <begin position="571"/>
        <end position="574"/>
    </location>
</feature>
<feature type="region of interest" description="G5" evidence="1">
    <location>
        <begin position="607"/>
        <end position="609"/>
    </location>
</feature>
<feature type="compositionally biased region" description="Basic and acidic residues" evidence="3">
    <location>
        <begin position="52"/>
        <end position="77"/>
    </location>
</feature>
<feature type="compositionally biased region" description="Polar residues" evidence="3">
    <location>
        <begin position="78"/>
        <end position="87"/>
    </location>
</feature>
<feature type="compositionally biased region" description="Basic and acidic residues" evidence="3">
    <location>
        <begin position="123"/>
        <end position="183"/>
    </location>
</feature>
<feature type="compositionally biased region" description="Basic and acidic residues" evidence="3">
    <location>
        <begin position="197"/>
        <end position="250"/>
    </location>
</feature>
<feature type="compositionally biased region" description="Basic and acidic residues" evidence="3">
    <location>
        <begin position="267"/>
        <end position="278"/>
    </location>
</feature>
<feature type="compositionally biased region" description="Gly residues" evidence="3">
    <location>
        <begin position="342"/>
        <end position="355"/>
    </location>
</feature>
<feature type="binding site" evidence="2">
    <location>
        <begin position="471"/>
        <end position="478"/>
    </location>
    <ligand>
        <name>GTP</name>
        <dbReference type="ChEBI" id="CHEBI:37565"/>
    </ligand>
</feature>
<feature type="binding site" evidence="2">
    <location>
        <begin position="517"/>
        <end position="521"/>
    </location>
    <ligand>
        <name>GTP</name>
        <dbReference type="ChEBI" id="CHEBI:37565"/>
    </ligand>
</feature>
<feature type="binding site" evidence="2">
    <location>
        <begin position="571"/>
        <end position="574"/>
    </location>
    <ligand>
        <name>GTP</name>
        <dbReference type="ChEBI" id="CHEBI:37565"/>
    </ligand>
</feature>
<accession>Q0K9B9</accession>